<proteinExistence type="inferred from homology"/>
<gene>
    <name evidence="1" type="primary">rsmA</name>
    <name evidence="1" type="synonym">ksgA</name>
    <name type="ordered locus">APP7_0423</name>
</gene>
<name>RSMA_ACTP7</name>
<organism>
    <name type="scientific">Actinobacillus pleuropneumoniae serotype 7 (strain AP76)</name>
    <dbReference type="NCBI Taxonomy" id="537457"/>
    <lineage>
        <taxon>Bacteria</taxon>
        <taxon>Pseudomonadati</taxon>
        <taxon>Pseudomonadota</taxon>
        <taxon>Gammaproteobacteria</taxon>
        <taxon>Pasteurellales</taxon>
        <taxon>Pasteurellaceae</taxon>
        <taxon>Actinobacillus</taxon>
    </lineage>
</organism>
<dbReference type="EC" id="2.1.1.182" evidence="1"/>
<dbReference type="EMBL" id="CP001091">
    <property type="protein sequence ID" value="ACE61075.1"/>
    <property type="molecule type" value="Genomic_DNA"/>
</dbReference>
<dbReference type="RefSeq" id="WP_005616838.1">
    <property type="nucleotide sequence ID" value="NC_010939.1"/>
</dbReference>
<dbReference type="SMR" id="B3H0R3"/>
<dbReference type="KEGG" id="apa:APP7_0423"/>
<dbReference type="HOGENOM" id="CLU_041220_0_1_6"/>
<dbReference type="Proteomes" id="UP000001226">
    <property type="component" value="Chromosome"/>
</dbReference>
<dbReference type="GO" id="GO:0005829">
    <property type="term" value="C:cytosol"/>
    <property type="evidence" value="ECO:0007669"/>
    <property type="project" value="TreeGrafter"/>
</dbReference>
<dbReference type="GO" id="GO:0052908">
    <property type="term" value="F:16S rRNA (adenine(1518)-N(6)/adenine(1519)-N(6))-dimethyltransferase activity"/>
    <property type="evidence" value="ECO:0007669"/>
    <property type="project" value="UniProtKB-EC"/>
</dbReference>
<dbReference type="GO" id="GO:0003723">
    <property type="term" value="F:RNA binding"/>
    <property type="evidence" value="ECO:0007669"/>
    <property type="project" value="UniProtKB-KW"/>
</dbReference>
<dbReference type="CDD" id="cd02440">
    <property type="entry name" value="AdoMet_MTases"/>
    <property type="match status" value="1"/>
</dbReference>
<dbReference type="FunFam" id="1.10.8.100:FF:000001">
    <property type="entry name" value="Ribosomal RNA small subunit methyltransferase A"/>
    <property type="match status" value="1"/>
</dbReference>
<dbReference type="FunFam" id="3.40.50.150:FF:000006">
    <property type="entry name" value="Ribosomal RNA small subunit methyltransferase A"/>
    <property type="match status" value="1"/>
</dbReference>
<dbReference type="Gene3D" id="1.10.8.100">
    <property type="entry name" value="Ribosomal RNA adenine dimethylase-like, domain 2"/>
    <property type="match status" value="1"/>
</dbReference>
<dbReference type="Gene3D" id="3.40.50.150">
    <property type="entry name" value="Vaccinia Virus protein VP39"/>
    <property type="match status" value="1"/>
</dbReference>
<dbReference type="HAMAP" id="MF_00607">
    <property type="entry name" value="16SrRNA_methyltr_A"/>
    <property type="match status" value="1"/>
</dbReference>
<dbReference type="InterPro" id="IPR001737">
    <property type="entry name" value="KsgA/Erm"/>
</dbReference>
<dbReference type="InterPro" id="IPR023165">
    <property type="entry name" value="rRNA_Ade_diMease-like_C"/>
</dbReference>
<dbReference type="InterPro" id="IPR020596">
    <property type="entry name" value="rRNA_Ade_Mease_Trfase_CS"/>
</dbReference>
<dbReference type="InterPro" id="IPR020598">
    <property type="entry name" value="rRNA_Ade_methylase_Trfase_N"/>
</dbReference>
<dbReference type="InterPro" id="IPR011530">
    <property type="entry name" value="rRNA_adenine_dimethylase"/>
</dbReference>
<dbReference type="InterPro" id="IPR029063">
    <property type="entry name" value="SAM-dependent_MTases_sf"/>
</dbReference>
<dbReference type="NCBIfam" id="TIGR00755">
    <property type="entry name" value="ksgA"/>
    <property type="match status" value="1"/>
</dbReference>
<dbReference type="PANTHER" id="PTHR11727">
    <property type="entry name" value="DIMETHYLADENOSINE TRANSFERASE"/>
    <property type="match status" value="1"/>
</dbReference>
<dbReference type="PANTHER" id="PTHR11727:SF7">
    <property type="entry name" value="DIMETHYLADENOSINE TRANSFERASE-RELATED"/>
    <property type="match status" value="1"/>
</dbReference>
<dbReference type="Pfam" id="PF00398">
    <property type="entry name" value="RrnaAD"/>
    <property type="match status" value="1"/>
</dbReference>
<dbReference type="SMART" id="SM00650">
    <property type="entry name" value="rADc"/>
    <property type="match status" value="1"/>
</dbReference>
<dbReference type="SUPFAM" id="SSF53335">
    <property type="entry name" value="S-adenosyl-L-methionine-dependent methyltransferases"/>
    <property type="match status" value="1"/>
</dbReference>
<dbReference type="PROSITE" id="PS01131">
    <property type="entry name" value="RRNA_A_DIMETH"/>
    <property type="match status" value="1"/>
</dbReference>
<dbReference type="PROSITE" id="PS51689">
    <property type="entry name" value="SAM_RNA_A_N6_MT"/>
    <property type="match status" value="1"/>
</dbReference>
<comment type="function">
    <text evidence="1">Specifically dimethylates two adjacent adenosines (A1518 and A1519) in the loop of a conserved hairpin near the 3'-end of 16S rRNA in the 30S particle. May play a critical role in biogenesis of 30S subunits.</text>
</comment>
<comment type="catalytic activity">
    <reaction evidence="1">
        <text>adenosine(1518)/adenosine(1519) in 16S rRNA + 4 S-adenosyl-L-methionine = N(6)-dimethyladenosine(1518)/N(6)-dimethyladenosine(1519) in 16S rRNA + 4 S-adenosyl-L-homocysteine + 4 H(+)</text>
        <dbReference type="Rhea" id="RHEA:19609"/>
        <dbReference type="Rhea" id="RHEA-COMP:10232"/>
        <dbReference type="Rhea" id="RHEA-COMP:10233"/>
        <dbReference type="ChEBI" id="CHEBI:15378"/>
        <dbReference type="ChEBI" id="CHEBI:57856"/>
        <dbReference type="ChEBI" id="CHEBI:59789"/>
        <dbReference type="ChEBI" id="CHEBI:74411"/>
        <dbReference type="ChEBI" id="CHEBI:74493"/>
        <dbReference type="EC" id="2.1.1.182"/>
    </reaction>
</comment>
<comment type="subcellular location">
    <subcellularLocation>
        <location evidence="1">Cytoplasm</location>
    </subcellularLocation>
</comment>
<comment type="similarity">
    <text evidence="1">Belongs to the class I-like SAM-binding methyltransferase superfamily. rRNA adenine N(6)-methyltransferase family. RsmA subfamily.</text>
</comment>
<evidence type="ECO:0000255" key="1">
    <source>
        <dbReference type="HAMAP-Rule" id="MF_00607"/>
    </source>
</evidence>
<sequence>MSNQNSKKHLGHTARKRFGQNFLHDMNVIHNIVSAINPKNGQFLLEIGPGLGALTEPVAEQVDKLTVVELDRDLAERLRHHPFLNHKLTIIEQDALRFNFREYFESLELREGEGVRVFGNLPYNISTPLMFHLFKFHDLIQDMHFMLQKEVVKRLCAAPNSKAYGRLTIMAQYYCQVMPVLEVPPTAFKPAPKVDSAVVRLMPHKVLPHPVKDVYWLNRVTTQAFNQRRKTLRNALSTLFSPEQLEALSIDLNARAENLSIADYARLANWLYDNPPAVDNQKEIIDEDI</sequence>
<feature type="chain" id="PRO_1000130236" description="Ribosomal RNA small subunit methyltransferase A">
    <location>
        <begin position="1"/>
        <end position="289"/>
    </location>
</feature>
<feature type="binding site" evidence="1">
    <location>
        <position position="21"/>
    </location>
    <ligand>
        <name>S-adenosyl-L-methionine</name>
        <dbReference type="ChEBI" id="CHEBI:59789"/>
    </ligand>
</feature>
<feature type="binding site" evidence="1">
    <location>
        <position position="23"/>
    </location>
    <ligand>
        <name>S-adenosyl-L-methionine</name>
        <dbReference type="ChEBI" id="CHEBI:59789"/>
    </ligand>
</feature>
<feature type="binding site" evidence="1">
    <location>
        <position position="48"/>
    </location>
    <ligand>
        <name>S-adenosyl-L-methionine</name>
        <dbReference type="ChEBI" id="CHEBI:59789"/>
    </ligand>
</feature>
<feature type="binding site" evidence="1">
    <location>
        <position position="69"/>
    </location>
    <ligand>
        <name>S-adenosyl-L-methionine</name>
        <dbReference type="ChEBI" id="CHEBI:59789"/>
    </ligand>
</feature>
<feature type="binding site" evidence="1">
    <location>
        <position position="94"/>
    </location>
    <ligand>
        <name>S-adenosyl-L-methionine</name>
        <dbReference type="ChEBI" id="CHEBI:59789"/>
    </ligand>
</feature>
<feature type="binding site" evidence="1">
    <location>
        <position position="120"/>
    </location>
    <ligand>
        <name>S-adenosyl-L-methionine</name>
        <dbReference type="ChEBI" id="CHEBI:59789"/>
    </ligand>
</feature>
<keyword id="KW-0963">Cytoplasm</keyword>
<keyword id="KW-0489">Methyltransferase</keyword>
<keyword id="KW-0694">RNA-binding</keyword>
<keyword id="KW-0698">rRNA processing</keyword>
<keyword id="KW-0949">S-adenosyl-L-methionine</keyword>
<keyword id="KW-0808">Transferase</keyword>
<accession>B3H0R3</accession>
<protein>
    <recommendedName>
        <fullName evidence="1">Ribosomal RNA small subunit methyltransferase A</fullName>
        <ecNumber evidence="1">2.1.1.182</ecNumber>
    </recommendedName>
    <alternativeName>
        <fullName evidence="1">16S rRNA (adenine(1518)-N(6)/adenine(1519)-N(6))-dimethyltransferase</fullName>
    </alternativeName>
    <alternativeName>
        <fullName evidence="1">16S rRNA dimethyladenosine transferase</fullName>
    </alternativeName>
    <alternativeName>
        <fullName evidence="1">16S rRNA dimethylase</fullName>
    </alternativeName>
    <alternativeName>
        <fullName evidence="1">S-adenosylmethionine-6-N', N'-adenosyl(rRNA) dimethyltransferase</fullName>
    </alternativeName>
</protein>
<reference key="1">
    <citation type="submission" date="2008-06" db="EMBL/GenBank/DDBJ databases">
        <title>Genome and proteome analysis of A. pleuropneumoniae serotype 7.</title>
        <authorList>
            <person name="Linke B."/>
            <person name="Buettner F."/>
            <person name="Martinez-Arias R."/>
            <person name="Goesmann A."/>
            <person name="Baltes N."/>
            <person name="Tegetmeyer H."/>
            <person name="Singh M."/>
            <person name="Gerlach G.F."/>
        </authorList>
    </citation>
    <scope>NUCLEOTIDE SEQUENCE [LARGE SCALE GENOMIC DNA]</scope>
    <source>
        <strain>AP76</strain>
    </source>
</reference>